<proteinExistence type="inferred from homology"/>
<name>RL16_STRPS</name>
<evidence type="ECO:0000255" key="1">
    <source>
        <dbReference type="HAMAP-Rule" id="MF_01342"/>
    </source>
</evidence>
<evidence type="ECO:0000305" key="2"/>
<protein>
    <recommendedName>
        <fullName evidence="1">Large ribosomal subunit protein uL16</fullName>
    </recommendedName>
    <alternativeName>
        <fullName evidence="2">50S ribosomal protein L16</fullName>
    </alternativeName>
</protein>
<comment type="function">
    <text evidence="1">Binds 23S rRNA and is also seen to make contacts with the A and possibly P site tRNAs.</text>
</comment>
<comment type="subunit">
    <text evidence="1">Part of the 50S ribosomal subunit.</text>
</comment>
<comment type="similarity">
    <text evidence="1">Belongs to the universal ribosomal protein uL16 family.</text>
</comment>
<organism>
    <name type="scientific">Streptococcus pneumoniae (strain CGSP14)</name>
    <dbReference type="NCBI Taxonomy" id="516950"/>
    <lineage>
        <taxon>Bacteria</taxon>
        <taxon>Bacillati</taxon>
        <taxon>Bacillota</taxon>
        <taxon>Bacilli</taxon>
        <taxon>Lactobacillales</taxon>
        <taxon>Streptococcaceae</taxon>
        <taxon>Streptococcus</taxon>
    </lineage>
</organism>
<keyword id="KW-0687">Ribonucleoprotein</keyword>
<keyword id="KW-0689">Ribosomal protein</keyword>
<keyword id="KW-0694">RNA-binding</keyword>
<keyword id="KW-0699">rRNA-binding</keyword>
<keyword id="KW-0820">tRNA-binding</keyword>
<sequence length="137" mass="15436">MLVPKRVKHRREFRGKMRGEAKGGKEVAFGEYGLQATTSHWITNRQIEAARIAMTRYMKRGGKVWIKIFPHKSYTAKAIGVRMGSGKGAPEGWVAPVKRGKVMFEIAGVSEEIAREALRLASHKLPVKCKFVKREAE</sequence>
<reference key="1">
    <citation type="journal article" date="2009" name="BMC Genomics">
        <title>Genome evolution driven by host adaptations results in a more virulent and antimicrobial-resistant Streptococcus pneumoniae serotype 14.</title>
        <authorList>
            <person name="Ding F."/>
            <person name="Tang P."/>
            <person name="Hsu M.-H."/>
            <person name="Cui P."/>
            <person name="Hu S."/>
            <person name="Yu J."/>
            <person name="Chiu C.-H."/>
        </authorList>
    </citation>
    <scope>NUCLEOTIDE SEQUENCE [LARGE SCALE GENOMIC DNA]</scope>
    <source>
        <strain>CGSP14</strain>
    </source>
</reference>
<accession>B2IS47</accession>
<feature type="chain" id="PRO_1000143037" description="Large ribosomal subunit protein uL16">
    <location>
        <begin position="1"/>
        <end position="137"/>
    </location>
</feature>
<dbReference type="EMBL" id="CP001033">
    <property type="protein sequence ID" value="ACB89477.1"/>
    <property type="molecule type" value="Genomic_DNA"/>
</dbReference>
<dbReference type="RefSeq" id="WP_000960946.1">
    <property type="nucleotide sequence ID" value="NC_010582.1"/>
</dbReference>
<dbReference type="SMR" id="B2IS47"/>
<dbReference type="GeneID" id="93738964"/>
<dbReference type="KEGG" id="spw:SPCG_0225"/>
<dbReference type="HOGENOM" id="CLU_078858_2_1_9"/>
<dbReference type="GO" id="GO:0022625">
    <property type="term" value="C:cytosolic large ribosomal subunit"/>
    <property type="evidence" value="ECO:0007669"/>
    <property type="project" value="TreeGrafter"/>
</dbReference>
<dbReference type="GO" id="GO:0019843">
    <property type="term" value="F:rRNA binding"/>
    <property type="evidence" value="ECO:0007669"/>
    <property type="project" value="UniProtKB-UniRule"/>
</dbReference>
<dbReference type="GO" id="GO:0003735">
    <property type="term" value="F:structural constituent of ribosome"/>
    <property type="evidence" value="ECO:0007669"/>
    <property type="project" value="InterPro"/>
</dbReference>
<dbReference type="GO" id="GO:0000049">
    <property type="term" value="F:tRNA binding"/>
    <property type="evidence" value="ECO:0007669"/>
    <property type="project" value="UniProtKB-KW"/>
</dbReference>
<dbReference type="GO" id="GO:0006412">
    <property type="term" value="P:translation"/>
    <property type="evidence" value="ECO:0007669"/>
    <property type="project" value="UniProtKB-UniRule"/>
</dbReference>
<dbReference type="CDD" id="cd01433">
    <property type="entry name" value="Ribosomal_L16_L10e"/>
    <property type="match status" value="1"/>
</dbReference>
<dbReference type="FunFam" id="3.90.1170.10:FF:000001">
    <property type="entry name" value="50S ribosomal protein L16"/>
    <property type="match status" value="1"/>
</dbReference>
<dbReference type="Gene3D" id="3.90.1170.10">
    <property type="entry name" value="Ribosomal protein L10e/L16"/>
    <property type="match status" value="1"/>
</dbReference>
<dbReference type="HAMAP" id="MF_01342">
    <property type="entry name" value="Ribosomal_uL16"/>
    <property type="match status" value="1"/>
</dbReference>
<dbReference type="InterPro" id="IPR047873">
    <property type="entry name" value="Ribosomal_uL16"/>
</dbReference>
<dbReference type="InterPro" id="IPR000114">
    <property type="entry name" value="Ribosomal_uL16_bact-type"/>
</dbReference>
<dbReference type="InterPro" id="IPR020798">
    <property type="entry name" value="Ribosomal_uL16_CS"/>
</dbReference>
<dbReference type="InterPro" id="IPR016180">
    <property type="entry name" value="Ribosomal_uL16_dom"/>
</dbReference>
<dbReference type="InterPro" id="IPR036920">
    <property type="entry name" value="Ribosomal_uL16_sf"/>
</dbReference>
<dbReference type="NCBIfam" id="TIGR01164">
    <property type="entry name" value="rplP_bact"/>
    <property type="match status" value="1"/>
</dbReference>
<dbReference type="PANTHER" id="PTHR12220">
    <property type="entry name" value="50S/60S RIBOSOMAL PROTEIN L16"/>
    <property type="match status" value="1"/>
</dbReference>
<dbReference type="PANTHER" id="PTHR12220:SF13">
    <property type="entry name" value="LARGE RIBOSOMAL SUBUNIT PROTEIN UL16M"/>
    <property type="match status" value="1"/>
</dbReference>
<dbReference type="Pfam" id="PF00252">
    <property type="entry name" value="Ribosomal_L16"/>
    <property type="match status" value="1"/>
</dbReference>
<dbReference type="PRINTS" id="PR00060">
    <property type="entry name" value="RIBOSOMALL16"/>
</dbReference>
<dbReference type="SUPFAM" id="SSF54686">
    <property type="entry name" value="Ribosomal protein L16p/L10e"/>
    <property type="match status" value="1"/>
</dbReference>
<dbReference type="PROSITE" id="PS00586">
    <property type="entry name" value="RIBOSOMAL_L16_1"/>
    <property type="match status" value="1"/>
</dbReference>
<dbReference type="PROSITE" id="PS00701">
    <property type="entry name" value="RIBOSOMAL_L16_2"/>
    <property type="match status" value="1"/>
</dbReference>
<gene>
    <name evidence="1" type="primary">rplP</name>
    <name type="ordered locus">SPCG_0225</name>
</gene>